<protein>
    <recommendedName>
        <fullName>R-spondin-3</fullName>
    </recommendedName>
    <alternativeName>
        <fullName>Protein with TSP type-1 repeat</fullName>
        <shortName>hPWTSR</shortName>
    </alternativeName>
    <alternativeName>
        <fullName>Roof plate-specific spondin-3</fullName>
        <shortName>hRspo3</shortName>
    </alternativeName>
    <alternativeName>
        <fullName>Thrombospondin type-1 domain-containing protein 2</fullName>
    </alternativeName>
</protein>
<proteinExistence type="evidence at protein level"/>
<dbReference type="EMBL" id="AF251057">
    <property type="protein sequence ID" value="AAK34947.1"/>
    <property type="molecule type" value="mRNA"/>
</dbReference>
<dbReference type="EMBL" id="AK027346">
    <property type="protein sequence ID" value="BAB55051.1"/>
    <property type="molecule type" value="mRNA"/>
</dbReference>
<dbReference type="EMBL" id="AK314912">
    <property type="protein sequence ID" value="BAG37424.1"/>
    <property type="molecule type" value="mRNA"/>
</dbReference>
<dbReference type="EMBL" id="AL590733">
    <property type="status" value="NOT_ANNOTATED_CDS"/>
    <property type="molecule type" value="Genomic_DNA"/>
</dbReference>
<dbReference type="EMBL" id="AL031776">
    <property type="status" value="NOT_ANNOTATED_CDS"/>
    <property type="molecule type" value="Genomic_DNA"/>
</dbReference>
<dbReference type="EMBL" id="CH471051">
    <property type="protein sequence ID" value="EAW48115.1"/>
    <property type="molecule type" value="Genomic_DNA"/>
</dbReference>
<dbReference type="EMBL" id="BC022367">
    <property type="protein sequence ID" value="AAH22367.1"/>
    <property type="molecule type" value="mRNA"/>
</dbReference>
<dbReference type="CCDS" id="CCDS5135.1">
    <molecule id="Q9BXY4-1"/>
</dbReference>
<dbReference type="RefSeq" id="NP_116173.2">
    <molecule id="Q9BXY4-1"/>
    <property type="nucleotide sequence ID" value="NM_032784.4"/>
</dbReference>
<dbReference type="SMR" id="Q9BXY4"/>
<dbReference type="BioGRID" id="124315">
    <property type="interactions" value="7"/>
</dbReference>
<dbReference type="CORUM" id="Q9BXY4"/>
<dbReference type="FunCoup" id="Q9BXY4">
    <property type="interactions" value="388"/>
</dbReference>
<dbReference type="IntAct" id="Q9BXY4">
    <property type="interactions" value="6"/>
</dbReference>
<dbReference type="MINT" id="Q9BXY4"/>
<dbReference type="STRING" id="9606.ENSP00000349131"/>
<dbReference type="GlyCosmos" id="Q9BXY4">
    <property type="glycosylation" value="1 site, No reported glycans"/>
</dbReference>
<dbReference type="GlyGen" id="Q9BXY4">
    <property type="glycosylation" value="4 sites"/>
</dbReference>
<dbReference type="iPTMnet" id="Q9BXY4"/>
<dbReference type="PhosphoSitePlus" id="Q9BXY4"/>
<dbReference type="BioMuta" id="RSPO3"/>
<dbReference type="DMDM" id="74752442"/>
<dbReference type="MassIVE" id="Q9BXY4"/>
<dbReference type="PaxDb" id="9606-ENSP00000349131"/>
<dbReference type="PeptideAtlas" id="Q9BXY4"/>
<dbReference type="ProteomicsDB" id="79540">
    <molecule id="Q9BXY4-1"/>
</dbReference>
<dbReference type="ProteomicsDB" id="79541">
    <molecule id="Q9BXY4-2"/>
</dbReference>
<dbReference type="ABCD" id="Q9BXY4">
    <property type="antibodies" value="1 sequenced antibody"/>
</dbReference>
<dbReference type="Antibodypedia" id="32746">
    <property type="antibodies" value="301 antibodies from 33 providers"/>
</dbReference>
<dbReference type="DNASU" id="84870"/>
<dbReference type="Ensembl" id="ENST00000356698.9">
    <molecule id="Q9BXY4-1"/>
    <property type="protein sequence ID" value="ENSP00000349131.4"/>
    <property type="gene ID" value="ENSG00000146374.14"/>
</dbReference>
<dbReference type="Ensembl" id="ENST00000368317.3">
    <molecule id="Q9BXY4-2"/>
    <property type="protein sequence ID" value="ENSP00000357300.3"/>
    <property type="gene ID" value="ENSG00000146374.14"/>
</dbReference>
<dbReference type="GeneID" id="84870"/>
<dbReference type="KEGG" id="hsa:84870"/>
<dbReference type="MANE-Select" id="ENST00000356698.9">
    <property type="protein sequence ID" value="ENSP00000349131.4"/>
    <property type="RefSeq nucleotide sequence ID" value="NM_032784.5"/>
    <property type="RefSeq protein sequence ID" value="NP_116173.2"/>
</dbReference>
<dbReference type="UCSC" id="uc003qar.5">
    <molecule id="Q9BXY4-1"/>
    <property type="organism name" value="human"/>
</dbReference>
<dbReference type="AGR" id="HGNC:20866"/>
<dbReference type="CTD" id="84870"/>
<dbReference type="DisGeNET" id="84870"/>
<dbReference type="GeneCards" id="RSPO3"/>
<dbReference type="HGNC" id="HGNC:20866">
    <property type="gene designation" value="RSPO3"/>
</dbReference>
<dbReference type="HPA" id="ENSG00000146374">
    <property type="expression patterns" value="Tissue enhanced (endometrium)"/>
</dbReference>
<dbReference type="MalaCards" id="RSPO3"/>
<dbReference type="MIM" id="610574">
    <property type="type" value="gene"/>
</dbReference>
<dbReference type="neXtProt" id="NX_Q9BXY4"/>
<dbReference type="OpenTargets" id="ENSG00000146374"/>
<dbReference type="PharmGKB" id="PA134885289"/>
<dbReference type="VEuPathDB" id="HostDB:ENSG00000146374"/>
<dbReference type="eggNOG" id="KOG3525">
    <property type="taxonomic scope" value="Eukaryota"/>
</dbReference>
<dbReference type="GeneTree" id="ENSGT00940000157815"/>
<dbReference type="HOGENOM" id="CLU_064219_0_0_1"/>
<dbReference type="InParanoid" id="Q9BXY4"/>
<dbReference type="OMA" id="CMTSCPL"/>
<dbReference type="OrthoDB" id="10257656at2759"/>
<dbReference type="PAN-GO" id="Q9BXY4">
    <property type="GO annotations" value="0 GO annotations based on evolutionary models"/>
</dbReference>
<dbReference type="PhylomeDB" id="Q9BXY4"/>
<dbReference type="TreeFam" id="TF331799"/>
<dbReference type="PathwayCommons" id="Q9BXY4"/>
<dbReference type="Reactome" id="R-HSA-4641263">
    <property type="pathway name" value="Regulation of FZD by ubiquitination"/>
</dbReference>
<dbReference type="Reactome" id="R-HSA-8939256">
    <property type="pathway name" value="RUNX1 regulates transcription of genes involved in WNT signaling"/>
</dbReference>
<dbReference type="SignaLink" id="Q9BXY4"/>
<dbReference type="SIGNOR" id="Q9BXY4"/>
<dbReference type="BioGRID-ORCS" id="84870">
    <property type="hits" value="10 hits in 1142 CRISPR screens"/>
</dbReference>
<dbReference type="ChiTaRS" id="RSPO3">
    <property type="organism name" value="human"/>
</dbReference>
<dbReference type="GeneWiki" id="RSPO3"/>
<dbReference type="GenomeRNAi" id="84870"/>
<dbReference type="Pharos" id="Q9BXY4">
    <property type="development level" value="Tbio"/>
</dbReference>
<dbReference type="PRO" id="PR:Q9BXY4"/>
<dbReference type="Proteomes" id="UP000005640">
    <property type="component" value="Chromosome 6"/>
</dbReference>
<dbReference type="RNAct" id="Q9BXY4">
    <property type="molecule type" value="protein"/>
</dbReference>
<dbReference type="Bgee" id="ENSG00000146374">
    <property type="expression patterns" value="Expressed in mucosa of stomach and 162 other cell types or tissues"/>
</dbReference>
<dbReference type="GO" id="GO:0005576">
    <property type="term" value="C:extracellular region"/>
    <property type="evidence" value="ECO:0000304"/>
    <property type="project" value="Reactome"/>
</dbReference>
<dbReference type="GO" id="GO:0005615">
    <property type="term" value="C:extracellular space"/>
    <property type="evidence" value="ECO:0000318"/>
    <property type="project" value="GO_Central"/>
</dbReference>
<dbReference type="GO" id="GO:0005109">
    <property type="term" value="F:frizzled binding"/>
    <property type="evidence" value="ECO:0000318"/>
    <property type="project" value="GO_Central"/>
</dbReference>
<dbReference type="GO" id="GO:0008201">
    <property type="term" value="F:heparin binding"/>
    <property type="evidence" value="ECO:0007669"/>
    <property type="project" value="UniProtKB-KW"/>
</dbReference>
<dbReference type="GO" id="GO:0005102">
    <property type="term" value="F:signaling receptor binding"/>
    <property type="evidence" value="ECO:0000353"/>
    <property type="project" value="UniProtKB"/>
</dbReference>
<dbReference type="GO" id="GO:0001974">
    <property type="term" value="P:blood vessel remodeling"/>
    <property type="evidence" value="ECO:0000250"/>
    <property type="project" value="UniProtKB"/>
</dbReference>
<dbReference type="GO" id="GO:0060670">
    <property type="term" value="P:branching involved in labyrinthine layer morphogenesis"/>
    <property type="evidence" value="ECO:0007669"/>
    <property type="project" value="Ensembl"/>
</dbReference>
<dbReference type="GO" id="GO:0060070">
    <property type="term" value="P:canonical Wnt signaling pathway"/>
    <property type="evidence" value="ECO:0007669"/>
    <property type="project" value="Ensembl"/>
</dbReference>
<dbReference type="GO" id="GO:0090263">
    <property type="term" value="P:positive regulation of canonical Wnt signaling pathway"/>
    <property type="evidence" value="ECO:0000318"/>
    <property type="project" value="GO_Central"/>
</dbReference>
<dbReference type="GO" id="GO:2000052">
    <property type="term" value="P:positive regulation of non-canonical Wnt signaling pathway"/>
    <property type="evidence" value="ECO:0000250"/>
    <property type="project" value="UniProtKB"/>
</dbReference>
<dbReference type="GO" id="GO:0030177">
    <property type="term" value="P:positive regulation of Wnt signaling pathway"/>
    <property type="evidence" value="ECO:0000314"/>
    <property type="project" value="UniProtKB"/>
</dbReference>
<dbReference type="GO" id="GO:2000096">
    <property type="term" value="P:positive regulation of Wnt signaling pathway, planar cell polarity pathway"/>
    <property type="evidence" value="ECO:0000304"/>
    <property type="project" value="ParkinsonsUK-UCL"/>
</dbReference>
<dbReference type="GO" id="GO:0002040">
    <property type="term" value="P:sprouting angiogenesis"/>
    <property type="evidence" value="ECO:0000250"/>
    <property type="project" value="UniProtKB"/>
</dbReference>
<dbReference type="CDD" id="cd00064">
    <property type="entry name" value="FU"/>
    <property type="match status" value="1"/>
</dbReference>
<dbReference type="FunFam" id="2.10.220.10:FF:000003">
    <property type="entry name" value="R-spondin 3"/>
    <property type="match status" value="1"/>
</dbReference>
<dbReference type="FunFam" id="2.20.100.10:FF:000043">
    <property type="entry name" value="R-spondin 3"/>
    <property type="match status" value="1"/>
</dbReference>
<dbReference type="Gene3D" id="2.10.220.10">
    <property type="entry name" value="Hormone Receptor, Insulin-like Growth Factor Receptor 1, Chain A, domain 2"/>
    <property type="match status" value="1"/>
</dbReference>
<dbReference type="Gene3D" id="2.20.100.10">
    <property type="entry name" value="Thrombospondin type-1 (TSP1) repeat"/>
    <property type="match status" value="1"/>
</dbReference>
<dbReference type="InterPro" id="IPR006212">
    <property type="entry name" value="Furin_repeat"/>
</dbReference>
<dbReference type="InterPro" id="IPR009030">
    <property type="entry name" value="Growth_fac_rcpt_cys_sf"/>
</dbReference>
<dbReference type="InterPro" id="IPR051514">
    <property type="entry name" value="R-spondin"/>
</dbReference>
<dbReference type="InterPro" id="IPR043601">
    <property type="entry name" value="Rspo_Fu-CRD_dom"/>
</dbReference>
<dbReference type="InterPro" id="IPR000884">
    <property type="entry name" value="TSP1_rpt"/>
</dbReference>
<dbReference type="InterPro" id="IPR036383">
    <property type="entry name" value="TSP1_rpt_sf"/>
</dbReference>
<dbReference type="InterPro" id="IPR044004">
    <property type="entry name" value="TSP1_spondin_dom"/>
</dbReference>
<dbReference type="PANTHER" id="PTHR46987">
    <property type="entry name" value="NEUROHYPOPHYSIAL HORMONES, N-TERMINAL DOMAIN CONTAINING PROTEIN"/>
    <property type="match status" value="1"/>
</dbReference>
<dbReference type="PANTHER" id="PTHR46987:SF1">
    <property type="entry name" value="R-SPONDIN-3"/>
    <property type="match status" value="1"/>
</dbReference>
<dbReference type="Pfam" id="PF15913">
    <property type="entry name" value="Furin-like_2"/>
    <property type="match status" value="1"/>
</dbReference>
<dbReference type="Pfam" id="PF19028">
    <property type="entry name" value="TSP1_spondin"/>
    <property type="match status" value="1"/>
</dbReference>
<dbReference type="SMART" id="SM00261">
    <property type="entry name" value="FU"/>
    <property type="match status" value="2"/>
</dbReference>
<dbReference type="SMART" id="SM00209">
    <property type="entry name" value="TSP1"/>
    <property type="match status" value="1"/>
</dbReference>
<dbReference type="SUPFAM" id="SSF57184">
    <property type="entry name" value="Growth factor receptor domain"/>
    <property type="match status" value="1"/>
</dbReference>
<dbReference type="SUPFAM" id="SSF82895">
    <property type="entry name" value="TSP-1 type 1 repeat"/>
    <property type="match status" value="1"/>
</dbReference>
<dbReference type="PROSITE" id="PS50092">
    <property type="entry name" value="TSP1"/>
    <property type="match status" value="1"/>
</dbReference>
<accession>Q9BXY4</accession>
<accession>B2RC27</accession>
<accession>Q5VTV4</accession>
<accession>Q96K87</accession>
<comment type="function">
    <text evidence="1 6 7 8 10">Activator of the canonical Wnt signaling pathway by acting as a ligand for LGR4-6 receptors, which acts as a key regulator of angiogenesis. Upon binding to LGR4-6 (LGR4, LGR5 or LGR6), LGR4-6 associate with phosphorylated LRP6 and frizzled receptors that are activated by extracellular Wnt receptors, triggering the canonical Wnt signaling pathway to increase expression of target genes. Also regulates the canonical Wnt/beta-catenin-dependent pathway and non-canonical Wnt signaling by acting as an inhibitor of ZNRF3, an important regulator of the Wnt signaling pathway. Acts as a ligand for frizzled FZD8 and LRP6. May negatively regulate the TGF-beta pathway (PubMed:21727895, PubMed:21909076, PubMed:22615920). Acts as a key regulator of angiogenesis by controlling vascular stability and pruning: acts by activating the non-canonical Wnt signaling pathway in endothelial cells (By similarity) (PubMed:21727895, PubMed:21909076, PubMed:22615920). Can also amplify Wnt signaling pathway independently of LGR4-6 receptors, possibly by acting as a direct antagonistic ligand to RNF43 and ZNRF3 (PubMed:29769720).</text>
</comment>
<comment type="subunit">
    <text evidence="1 6 7 8">Interacts with the extracellular domain of FZD8 and LRP6 (By similarity). It however does not form a ternary complex with FZD8 and LRP6 (By similarity). Interacts with WNT1 (By similarity). Binds heparin. Interacts with LGR4, LGR5 and LGR6 (PubMed:21727895, PubMed:21909076, PubMed:22615920).</text>
</comment>
<comment type="subcellular location">
    <subcellularLocation>
        <location evidence="1">Secreted</location>
    </subcellularLocation>
</comment>
<comment type="alternative products">
    <event type="alternative splicing"/>
    <isoform>
        <id>Q9BXY4-1</id>
        <name>1</name>
        <sequence type="displayed"/>
    </isoform>
    <isoform>
        <id>Q9BXY4-2</id>
        <name>2</name>
        <sequence type="described" ref="VSP_018324"/>
    </isoform>
</comment>
<comment type="tissue specificity">
    <text evidence="5 9">Ubiquitously expressed. Expressed at higher level in placenta, small intestine, fetal thymus and lymph node (PubMed:12463421). Highly expressed in endothelial cells (PubMed:26766444).</text>
</comment>
<comment type="domain">
    <text evidence="1">The FU repeats are required for activation and stabilization of beta-catenin.</text>
</comment>
<comment type="similarity">
    <text evidence="12">Belongs to the R-spondin family.</text>
</comment>
<keyword id="KW-0025">Alternative splicing</keyword>
<keyword id="KW-1015">Disulfide bond</keyword>
<keyword id="KW-0325">Glycoprotein</keyword>
<keyword id="KW-0358">Heparin-binding</keyword>
<keyword id="KW-1267">Proteomics identification</keyword>
<keyword id="KW-1185">Reference proteome</keyword>
<keyword id="KW-0677">Repeat</keyword>
<keyword id="KW-0964">Secreted</keyword>
<keyword id="KW-0716">Sensory transduction</keyword>
<keyword id="KW-0732">Signal</keyword>
<keyword id="KW-0879">Wnt signaling pathway</keyword>
<feature type="signal peptide" evidence="2">
    <location>
        <begin position="1"/>
        <end position="21"/>
    </location>
</feature>
<feature type="chain" id="PRO_0000234443" description="R-spondin-3">
    <location>
        <begin position="22"/>
        <end position="272"/>
    </location>
</feature>
<feature type="repeat" description="FU 1">
    <location>
        <begin position="35"/>
        <end position="86"/>
    </location>
</feature>
<feature type="repeat" description="FU 2">
    <location>
        <begin position="92"/>
        <end position="135"/>
    </location>
</feature>
<feature type="domain" description="TSP type-1" evidence="3">
    <location>
        <begin position="147"/>
        <end position="207"/>
    </location>
</feature>
<feature type="region of interest" description="Disordered" evidence="4">
    <location>
        <begin position="201"/>
        <end position="272"/>
    </location>
</feature>
<feature type="compositionally biased region" description="Basic residues" evidence="4">
    <location>
        <begin position="213"/>
        <end position="223"/>
    </location>
</feature>
<feature type="compositionally biased region" description="Basic and acidic residues" evidence="4">
    <location>
        <begin position="224"/>
        <end position="252"/>
    </location>
</feature>
<feature type="glycosylation site" description="N-linked (GlcNAc...) asparagine" evidence="2">
    <location>
        <position position="36"/>
    </location>
</feature>
<feature type="disulfide bond" evidence="3">
    <location>
        <begin position="41"/>
        <end position="48"/>
    </location>
</feature>
<feature type="disulfide bond" evidence="3">
    <location>
        <begin position="45"/>
        <end position="54"/>
    </location>
</feature>
<feature type="disulfide bond" evidence="3">
    <location>
        <begin position="57"/>
        <end position="76"/>
    </location>
</feature>
<feature type="disulfide bond" evidence="3">
    <location>
        <begin position="80"/>
        <end position="95"/>
    </location>
</feature>
<feature type="disulfide bond" evidence="3">
    <location>
        <begin position="98"/>
        <end position="105"/>
    </location>
</feature>
<feature type="disulfide bond" evidence="3">
    <location>
        <begin position="102"/>
        <end position="111"/>
    </location>
</feature>
<feature type="disulfide bond" evidence="3">
    <location>
        <begin position="114"/>
        <end position="125"/>
    </location>
</feature>
<feature type="disulfide bond" evidence="3">
    <location>
        <begin position="129"/>
        <end position="142"/>
    </location>
</feature>
<feature type="disulfide bond" evidence="3">
    <location>
        <begin position="148"/>
        <end position="190"/>
    </location>
</feature>
<feature type="disulfide bond" evidence="3">
    <location>
        <begin position="159"/>
        <end position="166"/>
    </location>
</feature>
<feature type="disulfide bond" evidence="3">
    <location>
        <begin position="199"/>
        <end position="206"/>
    </location>
</feature>
<feature type="splice variant" id="VSP_018324" description="In isoform 2." evidence="11">
    <original>VSVSTVH</original>
    <variation>GIEVTLAEGLTSVSQRTQPTPCRRRYL</variation>
    <location>
        <begin position="266"/>
        <end position="272"/>
    </location>
</feature>
<feature type="mutagenesis site" description="Loss of LGR4/5/6-binding, no effect on WNT3A signaling; when associated with A-110." evidence="10">
    <original>F</original>
    <variation>A</variation>
    <location>
        <position position="106"/>
    </location>
</feature>
<feature type="mutagenesis site" description="Loss of LGR4/5/6-binding, no effect on WNT3A signaling; when associated with A-106." evidence="10">
    <original>F</original>
    <variation>A</variation>
    <location>
        <position position="110"/>
    </location>
</feature>
<feature type="sequence conflict" description="In Ref. 2; BAB55051." evidence="12" ref="2">
    <original>C</original>
    <variation>R</variation>
    <location>
        <position position="41"/>
    </location>
</feature>
<feature type="sequence conflict" description="In Ref. 2; BAB55051." evidence="12" ref="2">
    <original>R</original>
    <variation>I</variation>
    <location>
        <position position="170"/>
    </location>
</feature>
<gene>
    <name type="primary">RSPO3</name>
    <name type="synonym">PWTSR</name>
    <name type="synonym">THSD2</name>
</gene>
<sequence>MHLRLISWLFIILNFMEYIGSQNASRGRRQRRMHPNVSQGCQGGCATCSDYNGCLSCKPRLFFALERIGMKQIGVCLSSCPSGYYGTRYPDINKCTKCKADCDTCFNKNFCTKCKSGFYLHLGKCLDNCPEGLEANNHTMECVSIVHCEVSEWNPWSPCTKKGKTCGFKRGTETRVREIIQHPSAKGNLCPPTNETRKCTVQRKKCQKGERGKKGRERKRKKPNKGESKEAIPDSKSLESSKEIPEQRENKQQQKKRKVQDKQKSVSVSTVH</sequence>
<name>RSPO3_HUMAN</name>
<reference key="1">
    <citation type="journal article" date="2002" name="Mol. Biol. Rep.">
        <title>Cloning and identification of a cDNA that encodes a novel human protein with thrombospondin type I repeat domain, hPWTSR.</title>
        <authorList>
            <person name="Chen J.-Z."/>
            <person name="Wang S."/>
            <person name="Tang R."/>
            <person name="Yang Q.-S."/>
            <person name="Zhao E."/>
            <person name="Chao Y."/>
            <person name="Ying K."/>
            <person name="Xie Y."/>
            <person name="Mao Y.-M."/>
        </authorList>
    </citation>
    <scope>NUCLEOTIDE SEQUENCE [MRNA] (ISOFORM 1)</scope>
    <scope>TISSUE SPECIFICITY</scope>
    <source>
        <tissue>Fetal brain</tissue>
    </source>
</reference>
<reference key="2">
    <citation type="journal article" date="2004" name="Nat. Genet.">
        <title>Complete sequencing and characterization of 21,243 full-length human cDNAs.</title>
        <authorList>
            <person name="Ota T."/>
            <person name="Suzuki Y."/>
            <person name="Nishikawa T."/>
            <person name="Otsuki T."/>
            <person name="Sugiyama T."/>
            <person name="Irie R."/>
            <person name="Wakamatsu A."/>
            <person name="Hayashi K."/>
            <person name="Sato H."/>
            <person name="Nagai K."/>
            <person name="Kimura K."/>
            <person name="Makita H."/>
            <person name="Sekine M."/>
            <person name="Obayashi M."/>
            <person name="Nishi T."/>
            <person name="Shibahara T."/>
            <person name="Tanaka T."/>
            <person name="Ishii S."/>
            <person name="Yamamoto J."/>
            <person name="Saito K."/>
            <person name="Kawai Y."/>
            <person name="Isono Y."/>
            <person name="Nakamura Y."/>
            <person name="Nagahari K."/>
            <person name="Murakami K."/>
            <person name="Yasuda T."/>
            <person name="Iwayanagi T."/>
            <person name="Wagatsuma M."/>
            <person name="Shiratori A."/>
            <person name="Sudo H."/>
            <person name="Hosoiri T."/>
            <person name="Kaku Y."/>
            <person name="Kodaira H."/>
            <person name="Kondo H."/>
            <person name="Sugawara M."/>
            <person name="Takahashi M."/>
            <person name="Kanda K."/>
            <person name="Yokoi T."/>
            <person name="Furuya T."/>
            <person name="Kikkawa E."/>
            <person name="Omura Y."/>
            <person name="Abe K."/>
            <person name="Kamihara K."/>
            <person name="Katsuta N."/>
            <person name="Sato K."/>
            <person name="Tanikawa M."/>
            <person name="Yamazaki M."/>
            <person name="Ninomiya K."/>
            <person name="Ishibashi T."/>
            <person name="Yamashita H."/>
            <person name="Murakawa K."/>
            <person name="Fujimori K."/>
            <person name="Tanai H."/>
            <person name="Kimata M."/>
            <person name="Watanabe M."/>
            <person name="Hiraoka S."/>
            <person name="Chiba Y."/>
            <person name="Ishida S."/>
            <person name="Ono Y."/>
            <person name="Takiguchi S."/>
            <person name="Watanabe S."/>
            <person name="Yosida M."/>
            <person name="Hotuta T."/>
            <person name="Kusano J."/>
            <person name="Kanehori K."/>
            <person name="Takahashi-Fujii A."/>
            <person name="Hara H."/>
            <person name="Tanase T.-O."/>
            <person name="Nomura Y."/>
            <person name="Togiya S."/>
            <person name="Komai F."/>
            <person name="Hara R."/>
            <person name="Takeuchi K."/>
            <person name="Arita M."/>
            <person name="Imose N."/>
            <person name="Musashino K."/>
            <person name="Yuuki H."/>
            <person name="Oshima A."/>
            <person name="Sasaki N."/>
            <person name="Aotsuka S."/>
            <person name="Yoshikawa Y."/>
            <person name="Matsunawa H."/>
            <person name="Ichihara T."/>
            <person name="Shiohata N."/>
            <person name="Sano S."/>
            <person name="Moriya S."/>
            <person name="Momiyama H."/>
            <person name="Satoh N."/>
            <person name="Takami S."/>
            <person name="Terashima Y."/>
            <person name="Suzuki O."/>
            <person name="Nakagawa S."/>
            <person name="Senoh A."/>
            <person name="Mizoguchi H."/>
            <person name="Goto Y."/>
            <person name="Shimizu F."/>
            <person name="Wakebe H."/>
            <person name="Hishigaki H."/>
            <person name="Watanabe T."/>
            <person name="Sugiyama A."/>
            <person name="Takemoto M."/>
            <person name="Kawakami B."/>
            <person name="Yamazaki M."/>
            <person name="Watanabe K."/>
            <person name="Kumagai A."/>
            <person name="Itakura S."/>
            <person name="Fukuzumi Y."/>
            <person name="Fujimori Y."/>
            <person name="Komiyama M."/>
            <person name="Tashiro H."/>
            <person name="Tanigami A."/>
            <person name="Fujiwara T."/>
            <person name="Ono T."/>
            <person name="Yamada K."/>
            <person name="Fujii Y."/>
            <person name="Ozaki K."/>
            <person name="Hirao M."/>
            <person name="Ohmori Y."/>
            <person name="Kawabata A."/>
            <person name="Hikiji T."/>
            <person name="Kobatake N."/>
            <person name="Inagaki H."/>
            <person name="Ikema Y."/>
            <person name="Okamoto S."/>
            <person name="Okitani R."/>
            <person name="Kawakami T."/>
            <person name="Noguchi S."/>
            <person name="Itoh T."/>
            <person name="Shigeta K."/>
            <person name="Senba T."/>
            <person name="Matsumura K."/>
            <person name="Nakajima Y."/>
            <person name="Mizuno T."/>
            <person name="Morinaga M."/>
            <person name="Sasaki M."/>
            <person name="Togashi T."/>
            <person name="Oyama M."/>
            <person name="Hata H."/>
            <person name="Watanabe M."/>
            <person name="Komatsu T."/>
            <person name="Mizushima-Sugano J."/>
            <person name="Satoh T."/>
            <person name="Shirai Y."/>
            <person name="Takahashi Y."/>
            <person name="Nakagawa K."/>
            <person name="Okumura K."/>
            <person name="Nagase T."/>
            <person name="Nomura N."/>
            <person name="Kikuchi H."/>
            <person name="Masuho Y."/>
            <person name="Yamashita R."/>
            <person name="Nakai K."/>
            <person name="Yada T."/>
            <person name="Nakamura Y."/>
            <person name="Ohara O."/>
            <person name="Isogai T."/>
            <person name="Sugano S."/>
        </authorList>
    </citation>
    <scope>NUCLEOTIDE SEQUENCE [LARGE SCALE MRNA] (ISOFORMS 1 AND 2)</scope>
    <source>
        <tissue>Amygdala</tissue>
        <tissue>Embryo</tissue>
    </source>
</reference>
<reference key="3">
    <citation type="journal article" date="2003" name="Nature">
        <title>The DNA sequence and analysis of human chromosome 6.</title>
        <authorList>
            <person name="Mungall A.J."/>
            <person name="Palmer S.A."/>
            <person name="Sims S.K."/>
            <person name="Edwards C.A."/>
            <person name="Ashurst J.L."/>
            <person name="Wilming L."/>
            <person name="Jones M.C."/>
            <person name="Horton R."/>
            <person name="Hunt S.E."/>
            <person name="Scott C.E."/>
            <person name="Gilbert J.G.R."/>
            <person name="Clamp M.E."/>
            <person name="Bethel G."/>
            <person name="Milne S."/>
            <person name="Ainscough R."/>
            <person name="Almeida J.P."/>
            <person name="Ambrose K.D."/>
            <person name="Andrews T.D."/>
            <person name="Ashwell R.I.S."/>
            <person name="Babbage A.K."/>
            <person name="Bagguley C.L."/>
            <person name="Bailey J."/>
            <person name="Banerjee R."/>
            <person name="Barker D.J."/>
            <person name="Barlow K.F."/>
            <person name="Bates K."/>
            <person name="Beare D.M."/>
            <person name="Beasley H."/>
            <person name="Beasley O."/>
            <person name="Bird C.P."/>
            <person name="Blakey S.E."/>
            <person name="Bray-Allen S."/>
            <person name="Brook J."/>
            <person name="Brown A.J."/>
            <person name="Brown J.Y."/>
            <person name="Burford D.C."/>
            <person name="Burrill W."/>
            <person name="Burton J."/>
            <person name="Carder C."/>
            <person name="Carter N.P."/>
            <person name="Chapman J.C."/>
            <person name="Clark S.Y."/>
            <person name="Clark G."/>
            <person name="Clee C.M."/>
            <person name="Clegg S."/>
            <person name="Cobley V."/>
            <person name="Collier R.E."/>
            <person name="Collins J.E."/>
            <person name="Colman L.K."/>
            <person name="Corby N.R."/>
            <person name="Coville G.J."/>
            <person name="Culley K.M."/>
            <person name="Dhami P."/>
            <person name="Davies J."/>
            <person name="Dunn M."/>
            <person name="Earthrowl M.E."/>
            <person name="Ellington A.E."/>
            <person name="Evans K.A."/>
            <person name="Faulkner L."/>
            <person name="Francis M.D."/>
            <person name="Frankish A."/>
            <person name="Frankland J."/>
            <person name="French L."/>
            <person name="Garner P."/>
            <person name="Garnett J."/>
            <person name="Ghori M.J."/>
            <person name="Gilby L.M."/>
            <person name="Gillson C.J."/>
            <person name="Glithero R.J."/>
            <person name="Grafham D.V."/>
            <person name="Grant M."/>
            <person name="Gribble S."/>
            <person name="Griffiths C."/>
            <person name="Griffiths M.N.D."/>
            <person name="Hall R."/>
            <person name="Halls K.S."/>
            <person name="Hammond S."/>
            <person name="Harley J.L."/>
            <person name="Hart E.A."/>
            <person name="Heath P.D."/>
            <person name="Heathcott R."/>
            <person name="Holmes S.J."/>
            <person name="Howden P.J."/>
            <person name="Howe K.L."/>
            <person name="Howell G.R."/>
            <person name="Huckle E."/>
            <person name="Humphray S.J."/>
            <person name="Humphries M.D."/>
            <person name="Hunt A.R."/>
            <person name="Johnson C.M."/>
            <person name="Joy A.A."/>
            <person name="Kay M."/>
            <person name="Keenan S.J."/>
            <person name="Kimberley A.M."/>
            <person name="King A."/>
            <person name="Laird G.K."/>
            <person name="Langford C."/>
            <person name="Lawlor S."/>
            <person name="Leongamornlert D.A."/>
            <person name="Leversha M."/>
            <person name="Lloyd C.R."/>
            <person name="Lloyd D.M."/>
            <person name="Loveland J.E."/>
            <person name="Lovell J."/>
            <person name="Martin S."/>
            <person name="Mashreghi-Mohammadi M."/>
            <person name="Maslen G.L."/>
            <person name="Matthews L."/>
            <person name="McCann O.T."/>
            <person name="McLaren S.J."/>
            <person name="McLay K."/>
            <person name="McMurray A."/>
            <person name="Moore M.J.F."/>
            <person name="Mullikin J.C."/>
            <person name="Niblett D."/>
            <person name="Nickerson T."/>
            <person name="Novik K.L."/>
            <person name="Oliver K."/>
            <person name="Overton-Larty E.K."/>
            <person name="Parker A."/>
            <person name="Patel R."/>
            <person name="Pearce A.V."/>
            <person name="Peck A.I."/>
            <person name="Phillimore B.J.C.T."/>
            <person name="Phillips S."/>
            <person name="Plumb R.W."/>
            <person name="Porter K.M."/>
            <person name="Ramsey Y."/>
            <person name="Ranby S.A."/>
            <person name="Rice C.M."/>
            <person name="Ross M.T."/>
            <person name="Searle S.M."/>
            <person name="Sehra H.K."/>
            <person name="Sheridan E."/>
            <person name="Skuce C.D."/>
            <person name="Smith S."/>
            <person name="Smith M."/>
            <person name="Spraggon L."/>
            <person name="Squares S.L."/>
            <person name="Steward C.A."/>
            <person name="Sycamore N."/>
            <person name="Tamlyn-Hall G."/>
            <person name="Tester J."/>
            <person name="Theaker A.J."/>
            <person name="Thomas D.W."/>
            <person name="Thorpe A."/>
            <person name="Tracey A."/>
            <person name="Tromans A."/>
            <person name="Tubby B."/>
            <person name="Wall M."/>
            <person name="Wallis J.M."/>
            <person name="West A.P."/>
            <person name="White S.S."/>
            <person name="Whitehead S.L."/>
            <person name="Whittaker H."/>
            <person name="Wild A."/>
            <person name="Willey D.J."/>
            <person name="Wilmer T.E."/>
            <person name="Wood J.M."/>
            <person name="Wray P.W."/>
            <person name="Wyatt J.C."/>
            <person name="Young L."/>
            <person name="Younger R.M."/>
            <person name="Bentley D.R."/>
            <person name="Coulson A."/>
            <person name="Durbin R.M."/>
            <person name="Hubbard T."/>
            <person name="Sulston J.E."/>
            <person name="Dunham I."/>
            <person name="Rogers J."/>
            <person name="Beck S."/>
        </authorList>
    </citation>
    <scope>NUCLEOTIDE SEQUENCE [LARGE SCALE GENOMIC DNA]</scope>
</reference>
<reference key="4">
    <citation type="submission" date="2005-09" db="EMBL/GenBank/DDBJ databases">
        <authorList>
            <person name="Mural R.J."/>
            <person name="Istrail S."/>
            <person name="Sutton G.G."/>
            <person name="Florea L."/>
            <person name="Halpern A.L."/>
            <person name="Mobarry C.M."/>
            <person name="Lippert R."/>
            <person name="Walenz B."/>
            <person name="Shatkay H."/>
            <person name="Dew I."/>
            <person name="Miller J.R."/>
            <person name="Flanigan M.J."/>
            <person name="Edwards N.J."/>
            <person name="Bolanos R."/>
            <person name="Fasulo D."/>
            <person name="Halldorsson B.V."/>
            <person name="Hannenhalli S."/>
            <person name="Turner R."/>
            <person name="Yooseph S."/>
            <person name="Lu F."/>
            <person name="Nusskern D.R."/>
            <person name="Shue B.C."/>
            <person name="Zheng X.H."/>
            <person name="Zhong F."/>
            <person name="Delcher A.L."/>
            <person name="Huson D.H."/>
            <person name="Kravitz S.A."/>
            <person name="Mouchard L."/>
            <person name="Reinert K."/>
            <person name="Remington K.A."/>
            <person name="Clark A.G."/>
            <person name="Waterman M.S."/>
            <person name="Eichler E.E."/>
            <person name="Adams M.D."/>
            <person name="Hunkapiller M.W."/>
            <person name="Myers E.W."/>
            <person name="Venter J.C."/>
        </authorList>
    </citation>
    <scope>NUCLEOTIDE SEQUENCE [LARGE SCALE GENOMIC DNA]</scope>
</reference>
<reference key="5">
    <citation type="journal article" date="2004" name="Genome Res.">
        <title>The status, quality, and expansion of the NIH full-length cDNA project: the Mammalian Gene Collection (MGC).</title>
        <authorList>
            <consortium name="The MGC Project Team"/>
        </authorList>
    </citation>
    <scope>NUCLEOTIDE SEQUENCE [LARGE SCALE MRNA] (ISOFORM 1)</scope>
    <source>
        <tissue>Placenta</tissue>
    </source>
</reference>
<reference key="6">
    <citation type="journal article" date="2011" name="EMBO Rep.">
        <title>LGR4 and LGR5 are R-spondin receptors mediating Wnt/beta-catenin and Wnt/PCP signalling.</title>
        <authorList>
            <person name="Glinka A."/>
            <person name="Dolde C."/>
            <person name="Kirsch N."/>
            <person name="Huang Y.L."/>
            <person name="Kazanskaya O."/>
            <person name="Ingelfinger D."/>
            <person name="Boutros M."/>
            <person name="Cruciat C.M."/>
            <person name="Niehrs C."/>
        </authorList>
    </citation>
    <scope>FUNCTION</scope>
    <scope>INTERACTION WITH LGR4 AND LGR5</scope>
</reference>
<reference key="7">
    <citation type="journal article" date="2011" name="Nature">
        <title>Lgr5 homologues associate with Wnt receptors and mediate R-spondin signalling.</title>
        <authorList>
            <person name="de Lau W."/>
            <person name="Barker N."/>
            <person name="Low T.Y."/>
            <person name="Koo B.K."/>
            <person name="Li V.S."/>
            <person name="Teunissen H."/>
            <person name="Kujala P."/>
            <person name="Haegebarth A."/>
            <person name="Peters P.J."/>
            <person name="van de Wetering M."/>
            <person name="Stange D.E."/>
            <person name="van Es J.E."/>
            <person name="Guardavaccaro D."/>
            <person name="Schasfoort R.B."/>
            <person name="Mohri Y."/>
            <person name="Nishimori K."/>
            <person name="Mohammed S."/>
            <person name="Heck A.J."/>
            <person name="Clevers H."/>
        </authorList>
    </citation>
    <scope>FUNCTION</scope>
    <scope>INTERACTION WITH LGR4; LGR5 AND LGR6</scope>
</reference>
<reference key="8">
    <citation type="journal article" date="2012" name="PLoS ONE">
        <title>LGR6 is a high affinity receptor of R-spondins and potentially functions as a tumor suppressor.</title>
        <authorList>
            <person name="Gong X."/>
            <person name="Carmon K.S."/>
            <person name="Lin Q."/>
            <person name="Thomas A."/>
            <person name="Yi J."/>
            <person name="Liu Q."/>
        </authorList>
    </citation>
    <scope>FUNCTION</scope>
    <scope>INTERACTION WITH LGR6</scope>
</reference>
<reference key="9">
    <citation type="journal article" date="2016" name="Dev. Cell">
        <title>Endothelial RSPO3 controls vascular stability and pruning through non-canonical WNT/Ca(2+)/NFAT signaling.</title>
        <authorList>
            <person name="Scholz B."/>
            <person name="Korn C."/>
            <person name="Wojtarowicz J."/>
            <person name="Mogler C."/>
            <person name="Augustin I."/>
            <person name="Boutros M."/>
            <person name="Niehrs C."/>
            <person name="Augustin H.G."/>
        </authorList>
    </citation>
    <scope>TISSUE SPECIFICITY</scope>
</reference>
<reference key="10">
    <citation type="journal article" date="2018" name="Nature">
        <title>RSPO2 inhibition of RNF43 and ZNRF3 governs limb development independently of LGR4/5/6.</title>
        <authorList>
            <person name="Szenker-Ravi E."/>
            <person name="Altunoglu U."/>
            <person name="Leushacke M."/>
            <person name="Bosso-Lefevre C."/>
            <person name="Khatoo M."/>
            <person name="Thi Tran H."/>
            <person name="Naert T."/>
            <person name="Noelanders R."/>
            <person name="Hajamohideen A."/>
            <person name="Beneteau C."/>
            <person name="de Sousa S.B."/>
            <person name="Karaman B."/>
            <person name="Latypova X."/>
            <person name="Basaran S."/>
            <person name="Yuecel E.B."/>
            <person name="Tan T.T."/>
            <person name="Vlaminck L."/>
            <person name="Nayak S.S."/>
            <person name="Shukla A."/>
            <person name="Girisha K.M."/>
            <person name="Le Caignec C."/>
            <person name="Soshnikova N."/>
            <person name="Uyguner Z.O."/>
            <person name="Vleminckx K."/>
            <person name="Barker N."/>
            <person name="Kayserili H."/>
            <person name="Reversade B."/>
        </authorList>
    </citation>
    <scope>FUNCTION</scope>
    <scope>MUTAGENESIS OF PHE-106 AND PHE-110</scope>
</reference>
<organism>
    <name type="scientific">Homo sapiens</name>
    <name type="common">Human</name>
    <dbReference type="NCBI Taxonomy" id="9606"/>
    <lineage>
        <taxon>Eukaryota</taxon>
        <taxon>Metazoa</taxon>
        <taxon>Chordata</taxon>
        <taxon>Craniata</taxon>
        <taxon>Vertebrata</taxon>
        <taxon>Euteleostomi</taxon>
        <taxon>Mammalia</taxon>
        <taxon>Eutheria</taxon>
        <taxon>Euarchontoglires</taxon>
        <taxon>Primates</taxon>
        <taxon>Haplorrhini</taxon>
        <taxon>Catarrhini</taxon>
        <taxon>Hominidae</taxon>
        <taxon>Homo</taxon>
    </lineage>
</organism>
<evidence type="ECO:0000250" key="1">
    <source>
        <dbReference type="UniProtKB" id="Q2TJ95"/>
    </source>
</evidence>
<evidence type="ECO:0000255" key="2"/>
<evidence type="ECO:0000255" key="3">
    <source>
        <dbReference type="PROSITE-ProRule" id="PRU00210"/>
    </source>
</evidence>
<evidence type="ECO:0000256" key="4">
    <source>
        <dbReference type="SAM" id="MobiDB-lite"/>
    </source>
</evidence>
<evidence type="ECO:0000269" key="5">
    <source>
    </source>
</evidence>
<evidence type="ECO:0000269" key="6">
    <source>
    </source>
</evidence>
<evidence type="ECO:0000269" key="7">
    <source>
    </source>
</evidence>
<evidence type="ECO:0000269" key="8">
    <source>
    </source>
</evidence>
<evidence type="ECO:0000269" key="9">
    <source>
    </source>
</evidence>
<evidence type="ECO:0000269" key="10">
    <source>
    </source>
</evidence>
<evidence type="ECO:0000303" key="11">
    <source>
    </source>
</evidence>
<evidence type="ECO:0000305" key="12"/>